<keyword id="KW-0963">Cytoplasm</keyword>
<keyword id="KW-0444">Lipid biosynthesis</keyword>
<keyword id="KW-0443">Lipid metabolism</keyword>
<keyword id="KW-0520">NAD</keyword>
<keyword id="KW-0521">NADP</keyword>
<keyword id="KW-0547">Nucleotide-binding</keyword>
<keyword id="KW-0560">Oxidoreductase</keyword>
<keyword id="KW-0594">Phospholipid biosynthesis</keyword>
<keyword id="KW-1208">Phospholipid metabolism</keyword>
<sequence length="335" mass="36449">MITSQTPITVLGAGSYGTALAITFSRNGSPTHLWGHNPVHIAQMQTERQNYRFLPDVIFPEDLHLESNLAQAMEYSQDILIVVPSHAFGEILIKIKPHLKAHHRLIWATKGLERNTGRLLQTVVEEQLGTQYPLAVLSGPTFAKELAQGLPSAITLAANNEQFAREFQSRIHCSKGFRVYINSDMTGVQLGGAIKNVIAIGAGISDGMGFGANARTALITRGIAEITRLGISLGANTNTFMGMSGLGDLVLTCTDNQSRNRRFGLMLGKGLDAQMAMENIGQVVEGFYNTKEAYLLAQRQGVEMPITEQIYQMLFCGKNAQDVAISLLGRACKGE</sequence>
<protein>
    <recommendedName>
        <fullName evidence="1">Glycerol-3-phosphate dehydrogenase [NAD(P)+]</fullName>
        <ecNumber evidence="1">1.1.1.94</ecNumber>
    </recommendedName>
    <alternativeName>
        <fullName evidence="1">NAD(P)(+)-dependent glycerol-3-phosphate dehydrogenase</fullName>
    </alternativeName>
    <alternativeName>
        <fullName evidence="1">NAD(P)H-dependent dihydroxyacetone-phosphate reductase</fullName>
    </alternativeName>
</protein>
<dbReference type="EC" id="1.1.1.94" evidence="1"/>
<dbReference type="EMBL" id="CP000671">
    <property type="protein sequence ID" value="ABQ97871.1"/>
    <property type="molecule type" value="Genomic_DNA"/>
</dbReference>
<dbReference type="SMR" id="A5UAS0"/>
<dbReference type="KEGG" id="hip:CGSHiEE_02000"/>
<dbReference type="HOGENOM" id="CLU_033449_0_2_6"/>
<dbReference type="UniPathway" id="UPA00940"/>
<dbReference type="GO" id="GO:0005829">
    <property type="term" value="C:cytosol"/>
    <property type="evidence" value="ECO:0007669"/>
    <property type="project" value="TreeGrafter"/>
</dbReference>
<dbReference type="GO" id="GO:0047952">
    <property type="term" value="F:glycerol-3-phosphate dehydrogenase [NAD(P)+] activity"/>
    <property type="evidence" value="ECO:0007669"/>
    <property type="project" value="UniProtKB-UniRule"/>
</dbReference>
<dbReference type="GO" id="GO:0051287">
    <property type="term" value="F:NAD binding"/>
    <property type="evidence" value="ECO:0007669"/>
    <property type="project" value="InterPro"/>
</dbReference>
<dbReference type="GO" id="GO:0005975">
    <property type="term" value="P:carbohydrate metabolic process"/>
    <property type="evidence" value="ECO:0007669"/>
    <property type="project" value="InterPro"/>
</dbReference>
<dbReference type="GO" id="GO:0046167">
    <property type="term" value="P:glycerol-3-phosphate biosynthetic process"/>
    <property type="evidence" value="ECO:0007669"/>
    <property type="project" value="UniProtKB-UniRule"/>
</dbReference>
<dbReference type="GO" id="GO:0046168">
    <property type="term" value="P:glycerol-3-phosphate catabolic process"/>
    <property type="evidence" value="ECO:0007669"/>
    <property type="project" value="InterPro"/>
</dbReference>
<dbReference type="GO" id="GO:0046474">
    <property type="term" value="P:glycerophospholipid biosynthetic process"/>
    <property type="evidence" value="ECO:0007669"/>
    <property type="project" value="TreeGrafter"/>
</dbReference>
<dbReference type="FunFam" id="1.10.1040.10:FF:000001">
    <property type="entry name" value="Glycerol-3-phosphate dehydrogenase [NAD(P)+]"/>
    <property type="match status" value="1"/>
</dbReference>
<dbReference type="FunFam" id="3.40.50.720:FF:000019">
    <property type="entry name" value="Glycerol-3-phosphate dehydrogenase [NAD(P)+]"/>
    <property type="match status" value="1"/>
</dbReference>
<dbReference type="Gene3D" id="1.10.1040.10">
    <property type="entry name" value="N-(1-d-carboxylethyl)-l-norvaline Dehydrogenase, domain 2"/>
    <property type="match status" value="1"/>
</dbReference>
<dbReference type="Gene3D" id="3.40.50.720">
    <property type="entry name" value="NAD(P)-binding Rossmann-like Domain"/>
    <property type="match status" value="1"/>
</dbReference>
<dbReference type="HAMAP" id="MF_00394">
    <property type="entry name" value="NAD_Glyc3P_dehydrog"/>
    <property type="match status" value="1"/>
</dbReference>
<dbReference type="InterPro" id="IPR008927">
    <property type="entry name" value="6-PGluconate_DH-like_C_sf"/>
</dbReference>
<dbReference type="InterPro" id="IPR013328">
    <property type="entry name" value="6PGD_dom2"/>
</dbReference>
<dbReference type="InterPro" id="IPR006168">
    <property type="entry name" value="G3P_DH_NAD-dep"/>
</dbReference>
<dbReference type="InterPro" id="IPR006109">
    <property type="entry name" value="G3P_DH_NAD-dep_C"/>
</dbReference>
<dbReference type="InterPro" id="IPR011128">
    <property type="entry name" value="G3P_DH_NAD-dep_N"/>
</dbReference>
<dbReference type="InterPro" id="IPR036291">
    <property type="entry name" value="NAD(P)-bd_dom_sf"/>
</dbReference>
<dbReference type="NCBIfam" id="NF000939">
    <property type="entry name" value="PRK00094.1-1"/>
    <property type="match status" value="1"/>
</dbReference>
<dbReference type="NCBIfam" id="NF000940">
    <property type="entry name" value="PRK00094.1-2"/>
    <property type="match status" value="1"/>
</dbReference>
<dbReference type="NCBIfam" id="NF000942">
    <property type="entry name" value="PRK00094.1-4"/>
    <property type="match status" value="1"/>
</dbReference>
<dbReference type="PANTHER" id="PTHR11728">
    <property type="entry name" value="GLYCEROL-3-PHOSPHATE DEHYDROGENASE"/>
    <property type="match status" value="1"/>
</dbReference>
<dbReference type="PANTHER" id="PTHR11728:SF1">
    <property type="entry name" value="GLYCEROL-3-PHOSPHATE DEHYDROGENASE [NAD(+)] 2, CHLOROPLASTIC"/>
    <property type="match status" value="1"/>
</dbReference>
<dbReference type="Pfam" id="PF07479">
    <property type="entry name" value="NAD_Gly3P_dh_C"/>
    <property type="match status" value="1"/>
</dbReference>
<dbReference type="Pfam" id="PF01210">
    <property type="entry name" value="NAD_Gly3P_dh_N"/>
    <property type="match status" value="1"/>
</dbReference>
<dbReference type="PIRSF" id="PIRSF000114">
    <property type="entry name" value="Glycerol-3-P_dh"/>
    <property type="match status" value="1"/>
</dbReference>
<dbReference type="PRINTS" id="PR00077">
    <property type="entry name" value="GPDHDRGNASE"/>
</dbReference>
<dbReference type="SUPFAM" id="SSF48179">
    <property type="entry name" value="6-phosphogluconate dehydrogenase C-terminal domain-like"/>
    <property type="match status" value="1"/>
</dbReference>
<dbReference type="SUPFAM" id="SSF51735">
    <property type="entry name" value="NAD(P)-binding Rossmann-fold domains"/>
    <property type="match status" value="1"/>
</dbReference>
<dbReference type="PROSITE" id="PS00957">
    <property type="entry name" value="NAD_G3PDH"/>
    <property type="match status" value="1"/>
</dbReference>
<proteinExistence type="inferred from homology"/>
<evidence type="ECO:0000255" key="1">
    <source>
        <dbReference type="HAMAP-Rule" id="MF_00394"/>
    </source>
</evidence>
<reference key="1">
    <citation type="journal article" date="2007" name="Genome Biol.">
        <title>Characterization and modeling of the Haemophilus influenzae core and supragenomes based on the complete genomic sequences of Rd and 12 clinical nontypeable strains.</title>
        <authorList>
            <person name="Hogg J.S."/>
            <person name="Hu F.Z."/>
            <person name="Janto B."/>
            <person name="Boissy R."/>
            <person name="Hayes J."/>
            <person name="Keefe R."/>
            <person name="Post J.C."/>
            <person name="Ehrlich G.D."/>
        </authorList>
    </citation>
    <scope>NUCLEOTIDE SEQUENCE [LARGE SCALE GENOMIC DNA]</scope>
    <source>
        <strain>PittEE</strain>
    </source>
</reference>
<organism>
    <name type="scientific">Haemophilus influenzae (strain PittEE)</name>
    <dbReference type="NCBI Taxonomy" id="374930"/>
    <lineage>
        <taxon>Bacteria</taxon>
        <taxon>Pseudomonadati</taxon>
        <taxon>Pseudomonadota</taxon>
        <taxon>Gammaproteobacteria</taxon>
        <taxon>Pasteurellales</taxon>
        <taxon>Pasteurellaceae</taxon>
        <taxon>Haemophilus</taxon>
    </lineage>
</organism>
<feature type="chain" id="PRO_1000049510" description="Glycerol-3-phosphate dehydrogenase [NAD(P)+]">
    <location>
        <begin position="1"/>
        <end position="335"/>
    </location>
</feature>
<feature type="active site" description="Proton acceptor" evidence="1">
    <location>
        <position position="195"/>
    </location>
</feature>
<feature type="binding site" evidence="1">
    <location>
        <position position="15"/>
    </location>
    <ligand>
        <name>NADPH</name>
        <dbReference type="ChEBI" id="CHEBI:57783"/>
    </ligand>
</feature>
<feature type="binding site" evidence="1">
    <location>
        <position position="16"/>
    </location>
    <ligand>
        <name>NADPH</name>
        <dbReference type="ChEBI" id="CHEBI:57783"/>
    </ligand>
</feature>
<feature type="binding site" evidence="1">
    <location>
        <position position="36"/>
    </location>
    <ligand>
        <name>NADPH</name>
        <dbReference type="ChEBI" id="CHEBI:57783"/>
    </ligand>
</feature>
<feature type="binding site" evidence="1">
    <location>
        <position position="110"/>
    </location>
    <ligand>
        <name>NADPH</name>
        <dbReference type="ChEBI" id="CHEBI:57783"/>
    </ligand>
</feature>
<feature type="binding site" evidence="1">
    <location>
        <position position="110"/>
    </location>
    <ligand>
        <name>sn-glycerol 3-phosphate</name>
        <dbReference type="ChEBI" id="CHEBI:57597"/>
    </ligand>
</feature>
<feature type="binding site" evidence="1">
    <location>
        <position position="139"/>
    </location>
    <ligand>
        <name>sn-glycerol 3-phosphate</name>
        <dbReference type="ChEBI" id="CHEBI:57597"/>
    </ligand>
</feature>
<feature type="binding site" evidence="1">
    <location>
        <position position="141"/>
    </location>
    <ligand>
        <name>sn-glycerol 3-phosphate</name>
        <dbReference type="ChEBI" id="CHEBI:57597"/>
    </ligand>
</feature>
<feature type="binding site" evidence="1">
    <location>
        <position position="143"/>
    </location>
    <ligand>
        <name>NADPH</name>
        <dbReference type="ChEBI" id="CHEBI:57783"/>
    </ligand>
</feature>
<feature type="binding site" evidence="1">
    <location>
        <position position="195"/>
    </location>
    <ligand>
        <name>sn-glycerol 3-phosphate</name>
        <dbReference type="ChEBI" id="CHEBI:57597"/>
    </ligand>
</feature>
<feature type="binding site" evidence="1">
    <location>
        <position position="248"/>
    </location>
    <ligand>
        <name>sn-glycerol 3-phosphate</name>
        <dbReference type="ChEBI" id="CHEBI:57597"/>
    </ligand>
</feature>
<feature type="binding site" evidence="1">
    <location>
        <position position="258"/>
    </location>
    <ligand>
        <name>sn-glycerol 3-phosphate</name>
        <dbReference type="ChEBI" id="CHEBI:57597"/>
    </ligand>
</feature>
<feature type="binding site" evidence="1">
    <location>
        <position position="259"/>
    </location>
    <ligand>
        <name>NADPH</name>
        <dbReference type="ChEBI" id="CHEBI:57783"/>
    </ligand>
</feature>
<feature type="binding site" evidence="1">
    <location>
        <position position="259"/>
    </location>
    <ligand>
        <name>sn-glycerol 3-phosphate</name>
        <dbReference type="ChEBI" id="CHEBI:57597"/>
    </ligand>
</feature>
<feature type="binding site" evidence="1">
    <location>
        <position position="260"/>
    </location>
    <ligand>
        <name>sn-glycerol 3-phosphate</name>
        <dbReference type="ChEBI" id="CHEBI:57597"/>
    </ligand>
</feature>
<feature type="binding site" evidence="1">
    <location>
        <position position="283"/>
    </location>
    <ligand>
        <name>NADPH</name>
        <dbReference type="ChEBI" id="CHEBI:57783"/>
    </ligand>
</feature>
<feature type="binding site" evidence="1">
    <location>
        <position position="285"/>
    </location>
    <ligand>
        <name>NADPH</name>
        <dbReference type="ChEBI" id="CHEBI:57783"/>
    </ligand>
</feature>
<name>GPDA_HAEIE</name>
<comment type="function">
    <text evidence="1">Catalyzes the reduction of the glycolytic intermediate dihydroxyacetone phosphate (DHAP) to sn-glycerol 3-phosphate (G3P), the key precursor for phospholipid synthesis.</text>
</comment>
<comment type="catalytic activity">
    <reaction evidence="1">
        <text>sn-glycerol 3-phosphate + NAD(+) = dihydroxyacetone phosphate + NADH + H(+)</text>
        <dbReference type="Rhea" id="RHEA:11092"/>
        <dbReference type="ChEBI" id="CHEBI:15378"/>
        <dbReference type="ChEBI" id="CHEBI:57540"/>
        <dbReference type="ChEBI" id="CHEBI:57597"/>
        <dbReference type="ChEBI" id="CHEBI:57642"/>
        <dbReference type="ChEBI" id="CHEBI:57945"/>
        <dbReference type="EC" id="1.1.1.94"/>
    </reaction>
    <physiologicalReaction direction="right-to-left" evidence="1">
        <dbReference type="Rhea" id="RHEA:11094"/>
    </physiologicalReaction>
</comment>
<comment type="catalytic activity">
    <reaction evidence="1">
        <text>sn-glycerol 3-phosphate + NADP(+) = dihydroxyacetone phosphate + NADPH + H(+)</text>
        <dbReference type="Rhea" id="RHEA:11096"/>
        <dbReference type="ChEBI" id="CHEBI:15378"/>
        <dbReference type="ChEBI" id="CHEBI:57597"/>
        <dbReference type="ChEBI" id="CHEBI:57642"/>
        <dbReference type="ChEBI" id="CHEBI:57783"/>
        <dbReference type="ChEBI" id="CHEBI:58349"/>
        <dbReference type="EC" id="1.1.1.94"/>
    </reaction>
    <physiologicalReaction direction="right-to-left" evidence="1">
        <dbReference type="Rhea" id="RHEA:11098"/>
    </physiologicalReaction>
</comment>
<comment type="pathway">
    <text evidence="1">Membrane lipid metabolism; glycerophospholipid metabolism.</text>
</comment>
<comment type="subcellular location">
    <subcellularLocation>
        <location evidence="1">Cytoplasm</location>
    </subcellularLocation>
</comment>
<comment type="similarity">
    <text evidence="1">Belongs to the NAD-dependent glycerol-3-phosphate dehydrogenase family.</text>
</comment>
<accession>A5UAS0</accession>
<gene>
    <name evidence="1" type="primary">gpsA</name>
    <name type="ordered locus">CGSHiEE_02000</name>
</gene>